<comment type="function">
    <text evidence="1">This protein is located at the 30S-50S ribosomal subunit interface and may play a role in the structure and function of the aminoacyl-tRNA binding site.</text>
</comment>
<comment type="similarity">
    <text evidence="1">Belongs to the bacterial ribosomal protein bL19 family.</text>
</comment>
<evidence type="ECO:0000255" key="1">
    <source>
        <dbReference type="HAMAP-Rule" id="MF_00402"/>
    </source>
</evidence>
<evidence type="ECO:0000305" key="2"/>
<sequence length="146" mass="16371">MNIIAQLEAEQCAKIEAKRQLPKFQAGDTVRVMVRVTEGTRTRVQAYEGVCIARSGGGLNETFTVRKISYGEGVERVFPVYSPLIEGVELVRRGKVRRAKLYYLRGLRGKAARIAEKRVYRKKDEKVAERVQATAVTVDVAEQAAE</sequence>
<name>RL19_BARQU</name>
<proteinExistence type="inferred from homology"/>
<protein>
    <recommendedName>
        <fullName evidence="1">Large ribosomal subunit protein bL19</fullName>
    </recommendedName>
    <alternativeName>
        <fullName evidence="2">50S ribosomal protein L19</fullName>
    </alternativeName>
</protein>
<organism>
    <name type="scientific">Bartonella quintana (strain Toulouse)</name>
    <name type="common">Rochalimaea quintana</name>
    <dbReference type="NCBI Taxonomy" id="283165"/>
    <lineage>
        <taxon>Bacteria</taxon>
        <taxon>Pseudomonadati</taxon>
        <taxon>Pseudomonadota</taxon>
        <taxon>Alphaproteobacteria</taxon>
        <taxon>Hyphomicrobiales</taxon>
        <taxon>Bartonellaceae</taxon>
        <taxon>Bartonella</taxon>
    </lineage>
</organism>
<dbReference type="EMBL" id="BX897700">
    <property type="protein sequence ID" value="CAF26732.1"/>
    <property type="molecule type" value="Genomic_DNA"/>
</dbReference>
<dbReference type="RefSeq" id="WP_011179898.1">
    <property type="nucleotide sequence ID" value="NC_005955.1"/>
</dbReference>
<dbReference type="SMR" id="Q6FYH5"/>
<dbReference type="GeneID" id="56533603"/>
<dbReference type="KEGG" id="bqu:BQ12730"/>
<dbReference type="eggNOG" id="COG0335">
    <property type="taxonomic scope" value="Bacteria"/>
</dbReference>
<dbReference type="HOGENOM" id="CLU_103507_1_0_5"/>
<dbReference type="OrthoDB" id="9803541at2"/>
<dbReference type="Proteomes" id="UP000000597">
    <property type="component" value="Chromosome"/>
</dbReference>
<dbReference type="GO" id="GO:0022625">
    <property type="term" value="C:cytosolic large ribosomal subunit"/>
    <property type="evidence" value="ECO:0007669"/>
    <property type="project" value="TreeGrafter"/>
</dbReference>
<dbReference type="GO" id="GO:0003735">
    <property type="term" value="F:structural constituent of ribosome"/>
    <property type="evidence" value="ECO:0007669"/>
    <property type="project" value="InterPro"/>
</dbReference>
<dbReference type="GO" id="GO:0006412">
    <property type="term" value="P:translation"/>
    <property type="evidence" value="ECO:0007669"/>
    <property type="project" value="UniProtKB-UniRule"/>
</dbReference>
<dbReference type="FunFam" id="2.30.30.790:FF:000001">
    <property type="entry name" value="50S ribosomal protein L19"/>
    <property type="match status" value="1"/>
</dbReference>
<dbReference type="Gene3D" id="2.30.30.790">
    <property type="match status" value="1"/>
</dbReference>
<dbReference type="HAMAP" id="MF_00402">
    <property type="entry name" value="Ribosomal_bL19"/>
    <property type="match status" value="1"/>
</dbReference>
<dbReference type="InterPro" id="IPR001857">
    <property type="entry name" value="Ribosomal_bL19"/>
</dbReference>
<dbReference type="InterPro" id="IPR018257">
    <property type="entry name" value="Ribosomal_bL19_CS"/>
</dbReference>
<dbReference type="InterPro" id="IPR038657">
    <property type="entry name" value="Ribosomal_bL19_sf"/>
</dbReference>
<dbReference type="InterPro" id="IPR008991">
    <property type="entry name" value="Translation_prot_SH3-like_sf"/>
</dbReference>
<dbReference type="NCBIfam" id="TIGR01024">
    <property type="entry name" value="rplS_bact"/>
    <property type="match status" value="1"/>
</dbReference>
<dbReference type="PANTHER" id="PTHR15680:SF9">
    <property type="entry name" value="LARGE RIBOSOMAL SUBUNIT PROTEIN BL19M"/>
    <property type="match status" value="1"/>
</dbReference>
<dbReference type="PANTHER" id="PTHR15680">
    <property type="entry name" value="RIBOSOMAL PROTEIN L19"/>
    <property type="match status" value="1"/>
</dbReference>
<dbReference type="Pfam" id="PF01245">
    <property type="entry name" value="Ribosomal_L19"/>
    <property type="match status" value="1"/>
</dbReference>
<dbReference type="PIRSF" id="PIRSF002191">
    <property type="entry name" value="Ribosomal_L19"/>
    <property type="match status" value="1"/>
</dbReference>
<dbReference type="PRINTS" id="PR00061">
    <property type="entry name" value="RIBOSOMALL19"/>
</dbReference>
<dbReference type="SUPFAM" id="SSF50104">
    <property type="entry name" value="Translation proteins SH3-like domain"/>
    <property type="match status" value="1"/>
</dbReference>
<dbReference type="PROSITE" id="PS01015">
    <property type="entry name" value="RIBOSOMAL_L19"/>
    <property type="match status" value="1"/>
</dbReference>
<feature type="chain" id="PRO_0000163416" description="Large ribosomal subunit protein bL19">
    <location>
        <begin position="1"/>
        <end position="146"/>
    </location>
</feature>
<accession>Q6FYH5</accession>
<gene>
    <name evidence="1" type="primary">rplS</name>
    <name type="ordered locus">BQ12730</name>
</gene>
<keyword id="KW-0687">Ribonucleoprotein</keyword>
<keyword id="KW-0689">Ribosomal protein</keyword>
<reference key="1">
    <citation type="journal article" date="2004" name="Proc. Natl. Acad. Sci. U.S.A.">
        <title>The louse-borne human pathogen Bartonella quintana is a genomic derivative of the zoonotic agent Bartonella henselae.</title>
        <authorList>
            <person name="Alsmark U.C.M."/>
            <person name="Frank A.C."/>
            <person name="Karlberg E.O."/>
            <person name="Legault B.-A."/>
            <person name="Ardell D.H."/>
            <person name="Canbaeck B."/>
            <person name="Eriksson A.-S."/>
            <person name="Naeslund A.K."/>
            <person name="Handley S.A."/>
            <person name="Huvet M."/>
            <person name="La Scola B."/>
            <person name="Holmberg M."/>
            <person name="Andersson S.G.E."/>
        </authorList>
    </citation>
    <scope>NUCLEOTIDE SEQUENCE [LARGE SCALE GENOMIC DNA]</scope>
    <source>
        <strain>Toulouse</strain>
    </source>
</reference>